<evidence type="ECO:0000255" key="1">
    <source>
        <dbReference type="HAMAP-Rule" id="MF_00249"/>
    </source>
</evidence>
<evidence type="ECO:0000256" key="2">
    <source>
        <dbReference type="SAM" id="MobiDB-lite"/>
    </source>
</evidence>
<organism>
    <name type="scientific">Staphylococcus carnosus (strain TM300)</name>
    <dbReference type="NCBI Taxonomy" id="396513"/>
    <lineage>
        <taxon>Bacteria</taxon>
        <taxon>Bacillati</taxon>
        <taxon>Bacillota</taxon>
        <taxon>Bacilli</taxon>
        <taxon>Bacillales</taxon>
        <taxon>Staphylococcaceae</taxon>
        <taxon>Staphylococcus</taxon>
    </lineage>
</organism>
<comment type="function">
    <text evidence="1">ATPase subunit of a proteasome-like degradation complex; this subunit has chaperone activity. The binding of ATP and its subsequent hydrolysis by HslU are essential for unfolding of protein substrates subsequently hydrolyzed by HslV. HslU recognizes the N-terminal part of its protein substrates and unfolds these before they are guided to HslV for hydrolysis.</text>
</comment>
<comment type="subunit">
    <text evidence="1">A double ring-shaped homohexamer of HslV is capped on each side by a ring-shaped HslU homohexamer. The assembly of the HslU/HslV complex is dependent on binding of ATP.</text>
</comment>
<comment type="subcellular location">
    <subcellularLocation>
        <location evidence="1">Cytoplasm</location>
    </subcellularLocation>
</comment>
<comment type="similarity">
    <text evidence="1">Belongs to the ClpX chaperone family. HslU subfamily.</text>
</comment>
<name>HSLU_STACT</name>
<dbReference type="EMBL" id="AM295250">
    <property type="protein sequence ID" value="CAL27798.1"/>
    <property type="molecule type" value="Genomic_DNA"/>
</dbReference>
<dbReference type="RefSeq" id="WP_015900139.1">
    <property type="nucleotide sequence ID" value="NC_012121.1"/>
</dbReference>
<dbReference type="SMR" id="B9DPG6"/>
<dbReference type="GeneID" id="93793319"/>
<dbReference type="KEGG" id="sca:SCA_0889"/>
<dbReference type="eggNOG" id="COG1220">
    <property type="taxonomic scope" value="Bacteria"/>
</dbReference>
<dbReference type="HOGENOM" id="CLU_033123_0_0_9"/>
<dbReference type="OrthoDB" id="9804062at2"/>
<dbReference type="BioCyc" id="SCAR396513:SCA_RS04485-MONOMER"/>
<dbReference type="Proteomes" id="UP000000444">
    <property type="component" value="Chromosome"/>
</dbReference>
<dbReference type="GO" id="GO:0009376">
    <property type="term" value="C:HslUV protease complex"/>
    <property type="evidence" value="ECO:0007669"/>
    <property type="project" value="UniProtKB-UniRule"/>
</dbReference>
<dbReference type="GO" id="GO:0005524">
    <property type="term" value="F:ATP binding"/>
    <property type="evidence" value="ECO:0007669"/>
    <property type="project" value="UniProtKB-UniRule"/>
</dbReference>
<dbReference type="GO" id="GO:0016887">
    <property type="term" value="F:ATP hydrolysis activity"/>
    <property type="evidence" value="ECO:0007669"/>
    <property type="project" value="InterPro"/>
</dbReference>
<dbReference type="GO" id="GO:0008233">
    <property type="term" value="F:peptidase activity"/>
    <property type="evidence" value="ECO:0007669"/>
    <property type="project" value="InterPro"/>
</dbReference>
<dbReference type="GO" id="GO:0036402">
    <property type="term" value="F:proteasome-activating activity"/>
    <property type="evidence" value="ECO:0007669"/>
    <property type="project" value="UniProtKB-UniRule"/>
</dbReference>
<dbReference type="GO" id="GO:0043335">
    <property type="term" value="P:protein unfolding"/>
    <property type="evidence" value="ECO:0007669"/>
    <property type="project" value="UniProtKB-UniRule"/>
</dbReference>
<dbReference type="GO" id="GO:0051603">
    <property type="term" value="P:proteolysis involved in protein catabolic process"/>
    <property type="evidence" value="ECO:0007669"/>
    <property type="project" value="TreeGrafter"/>
</dbReference>
<dbReference type="CDD" id="cd19498">
    <property type="entry name" value="RecA-like_HslU"/>
    <property type="match status" value="1"/>
</dbReference>
<dbReference type="FunFam" id="3.40.50.300:FF:000220">
    <property type="entry name" value="ATP-dependent protease ATPase subunit HslU"/>
    <property type="match status" value="1"/>
</dbReference>
<dbReference type="Gene3D" id="1.10.8.60">
    <property type="match status" value="1"/>
</dbReference>
<dbReference type="Gene3D" id="3.40.50.300">
    <property type="entry name" value="P-loop containing nucleotide triphosphate hydrolases"/>
    <property type="match status" value="2"/>
</dbReference>
<dbReference type="HAMAP" id="MF_00249">
    <property type="entry name" value="HslU"/>
    <property type="match status" value="1"/>
</dbReference>
<dbReference type="InterPro" id="IPR003593">
    <property type="entry name" value="AAA+_ATPase"/>
</dbReference>
<dbReference type="InterPro" id="IPR050052">
    <property type="entry name" value="ATP-dep_Clp_protease_ClpX"/>
</dbReference>
<dbReference type="InterPro" id="IPR003959">
    <property type="entry name" value="ATPase_AAA_core"/>
</dbReference>
<dbReference type="InterPro" id="IPR019489">
    <property type="entry name" value="Clp_ATPase_C"/>
</dbReference>
<dbReference type="InterPro" id="IPR004491">
    <property type="entry name" value="HslU"/>
</dbReference>
<dbReference type="InterPro" id="IPR027417">
    <property type="entry name" value="P-loop_NTPase"/>
</dbReference>
<dbReference type="NCBIfam" id="TIGR00390">
    <property type="entry name" value="hslU"/>
    <property type="match status" value="1"/>
</dbReference>
<dbReference type="NCBIfam" id="NF003544">
    <property type="entry name" value="PRK05201.1"/>
    <property type="match status" value="1"/>
</dbReference>
<dbReference type="PANTHER" id="PTHR48102">
    <property type="entry name" value="ATP-DEPENDENT CLP PROTEASE ATP-BINDING SUBUNIT CLPX-LIKE, MITOCHONDRIAL-RELATED"/>
    <property type="match status" value="1"/>
</dbReference>
<dbReference type="PANTHER" id="PTHR48102:SF3">
    <property type="entry name" value="ATP-DEPENDENT PROTEASE ATPASE SUBUNIT HSLU"/>
    <property type="match status" value="1"/>
</dbReference>
<dbReference type="Pfam" id="PF00004">
    <property type="entry name" value="AAA"/>
    <property type="match status" value="1"/>
</dbReference>
<dbReference type="Pfam" id="PF07724">
    <property type="entry name" value="AAA_2"/>
    <property type="match status" value="1"/>
</dbReference>
<dbReference type="Pfam" id="PF10431">
    <property type="entry name" value="ClpB_D2-small"/>
    <property type="match status" value="1"/>
</dbReference>
<dbReference type="SMART" id="SM00382">
    <property type="entry name" value="AAA"/>
    <property type="match status" value="1"/>
</dbReference>
<dbReference type="SMART" id="SM01086">
    <property type="entry name" value="ClpB_D2-small"/>
    <property type="match status" value="1"/>
</dbReference>
<dbReference type="SUPFAM" id="SSF52540">
    <property type="entry name" value="P-loop containing nucleoside triphosphate hydrolases"/>
    <property type="match status" value="1"/>
</dbReference>
<keyword id="KW-0067">ATP-binding</keyword>
<keyword id="KW-0143">Chaperone</keyword>
<keyword id="KW-0963">Cytoplasm</keyword>
<keyword id="KW-0547">Nucleotide-binding</keyword>
<keyword id="KW-1185">Reference proteome</keyword>
<accession>B9DPG6</accession>
<gene>
    <name evidence="1" type="primary">hslU</name>
    <name type="ordered locus">Sca_0889</name>
</gene>
<reference key="1">
    <citation type="journal article" date="2009" name="Appl. Environ. Microbiol.">
        <title>Genome analysis of the meat starter culture bacterium Staphylococcus carnosus TM300.</title>
        <authorList>
            <person name="Rosenstein R."/>
            <person name="Nerz C."/>
            <person name="Biswas L."/>
            <person name="Resch A."/>
            <person name="Raddatz G."/>
            <person name="Schuster S.C."/>
            <person name="Goetz F."/>
        </authorList>
    </citation>
    <scope>NUCLEOTIDE SEQUENCE [LARGE SCALE GENOMIC DNA]</scope>
    <source>
        <strain>TM300</strain>
    </source>
</reference>
<feature type="chain" id="PRO_1000125451" description="ATP-dependent protease ATPase subunit HslU">
    <location>
        <begin position="1"/>
        <end position="468"/>
    </location>
</feature>
<feature type="region of interest" description="Disordered" evidence="2">
    <location>
        <begin position="166"/>
        <end position="187"/>
    </location>
</feature>
<feature type="compositionally biased region" description="Acidic residues" evidence="2">
    <location>
        <begin position="169"/>
        <end position="178"/>
    </location>
</feature>
<feature type="binding site" evidence="1">
    <location>
        <position position="22"/>
    </location>
    <ligand>
        <name>ATP</name>
        <dbReference type="ChEBI" id="CHEBI:30616"/>
    </ligand>
</feature>
<feature type="binding site" evidence="1">
    <location>
        <begin position="64"/>
        <end position="69"/>
    </location>
    <ligand>
        <name>ATP</name>
        <dbReference type="ChEBI" id="CHEBI:30616"/>
    </ligand>
</feature>
<feature type="binding site" evidence="1">
    <location>
        <position position="281"/>
    </location>
    <ligand>
        <name>ATP</name>
        <dbReference type="ChEBI" id="CHEBI:30616"/>
    </ligand>
</feature>
<feature type="binding site" evidence="1">
    <location>
        <position position="346"/>
    </location>
    <ligand>
        <name>ATP</name>
        <dbReference type="ChEBI" id="CHEBI:30616"/>
    </ligand>
</feature>
<feature type="binding site" evidence="1">
    <location>
        <position position="418"/>
    </location>
    <ligand>
        <name>ATP</name>
        <dbReference type="ChEBI" id="CHEBI:30616"/>
    </ligand>
</feature>
<proteinExistence type="inferred from homology"/>
<sequence length="468" mass="52362">MDASAIKLTPKDIVSQLNEYIVGQNDAKKKVAIALRNRYRRSQLDEEMKQEIVPKNILMIGPTGVGKTEIARRMAKIVGAPFIKVEATKFTEVGYVGRDVESMVRDLVDVAVRLVKEDRKDKVKDEAVKKANDKLVKLLVPSMKKKANQNAGNPFESIFGGMMPNFGNNDEEDEEPPTEDIKTKRSEIRSQLLNGQLEEEKVRIKVEQDPGALGMLGTNQNQQVQDMMNQLMPKKKVEREVPVKTARKILADEYADELIDHETANQEALELAEQMGIIFIDEIDKVASNNQGGGQDVSRQGVQRDILPIVEGSVVQTKYGSVNTEHMLFIGAGAFHVSKPSDLIPELQGRFPIRVELDSLSVDDFVNILKEPKLSLIKQYEALLQTEEVTVNFTDEAITRLAEIAYQVNQDTDNIGARRLHTILEKMLEDLSYEAPGMPNAVVDITAQYVDDKLKSISTNKDLSAFIL</sequence>
<protein>
    <recommendedName>
        <fullName evidence="1">ATP-dependent protease ATPase subunit HslU</fullName>
    </recommendedName>
    <alternativeName>
        <fullName evidence="1">Unfoldase HslU</fullName>
    </alternativeName>
</protein>